<gene>
    <name evidence="1" type="primary">clpP</name>
    <name type="ordered locus">SPD_0650</name>
</gene>
<protein>
    <recommendedName>
        <fullName evidence="1">ATP-dependent Clp protease proteolytic subunit</fullName>
        <ecNumber evidence="1">3.4.21.92</ecNumber>
    </recommendedName>
    <alternativeName>
        <fullName evidence="1">Endopeptidase Clp</fullName>
    </alternativeName>
</protein>
<feature type="chain" id="PRO_1000026134" description="ATP-dependent Clp protease proteolytic subunit">
    <location>
        <begin position="1"/>
        <end position="196"/>
    </location>
</feature>
<feature type="active site" description="Nucleophile" evidence="1">
    <location>
        <position position="96"/>
    </location>
</feature>
<feature type="active site" evidence="1">
    <location>
        <position position="121"/>
    </location>
</feature>
<organism>
    <name type="scientific">Streptococcus pneumoniae serotype 2 (strain D39 / NCTC 7466)</name>
    <dbReference type="NCBI Taxonomy" id="373153"/>
    <lineage>
        <taxon>Bacteria</taxon>
        <taxon>Bacillati</taxon>
        <taxon>Bacillota</taxon>
        <taxon>Bacilli</taxon>
        <taxon>Lactobacillales</taxon>
        <taxon>Streptococcaceae</taxon>
        <taxon>Streptococcus</taxon>
    </lineage>
</organism>
<keyword id="KW-0963">Cytoplasm</keyword>
<keyword id="KW-0378">Hydrolase</keyword>
<keyword id="KW-0645">Protease</keyword>
<keyword id="KW-1185">Reference proteome</keyword>
<keyword id="KW-0720">Serine protease</keyword>
<evidence type="ECO:0000255" key="1">
    <source>
        <dbReference type="HAMAP-Rule" id="MF_00444"/>
    </source>
</evidence>
<dbReference type="EC" id="3.4.21.92" evidence="1"/>
<dbReference type="EMBL" id="CP000410">
    <property type="protein sequence ID" value="ABJ54512.1"/>
    <property type="molecule type" value="Genomic_DNA"/>
</dbReference>
<dbReference type="RefSeq" id="WP_000613477.1">
    <property type="nucleotide sequence ID" value="NZ_JAMLJR010000001.1"/>
</dbReference>
<dbReference type="SMR" id="Q04LF4"/>
<dbReference type="MEROPS" id="S14.001"/>
<dbReference type="PaxDb" id="373153-SPD_0650"/>
<dbReference type="KEGG" id="spd:SPD_0650"/>
<dbReference type="eggNOG" id="COG0740">
    <property type="taxonomic scope" value="Bacteria"/>
</dbReference>
<dbReference type="HOGENOM" id="CLU_058707_3_2_9"/>
<dbReference type="BioCyc" id="SPNE373153:G1G6V-714-MONOMER"/>
<dbReference type="Proteomes" id="UP000001452">
    <property type="component" value="Chromosome"/>
</dbReference>
<dbReference type="GO" id="GO:0005737">
    <property type="term" value="C:cytoplasm"/>
    <property type="evidence" value="ECO:0007669"/>
    <property type="project" value="UniProtKB-SubCell"/>
</dbReference>
<dbReference type="GO" id="GO:0009368">
    <property type="term" value="C:endopeptidase Clp complex"/>
    <property type="evidence" value="ECO:0007669"/>
    <property type="project" value="TreeGrafter"/>
</dbReference>
<dbReference type="GO" id="GO:0004176">
    <property type="term" value="F:ATP-dependent peptidase activity"/>
    <property type="evidence" value="ECO:0007669"/>
    <property type="project" value="InterPro"/>
</dbReference>
<dbReference type="GO" id="GO:0051117">
    <property type="term" value="F:ATPase binding"/>
    <property type="evidence" value="ECO:0007669"/>
    <property type="project" value="TreeGrafter"/>
</dbReference>
<dbReference type="GO" id="GO:0004252">
    <property type="term" value="F:serine-type endopeptidase activity"/>
    <property type="evidence" value="ECO:0007669"/>
    <property type="project" value="UniProtKB-UniRule"/>
</dbReference>
<dbReference type="GO" id="GO:0006515">
    <property type="term" value="P:protein quality control for misfolded or incompletely synthesized proteins"/>
    <property type="evidence" value="ECO:0007669"/>
    <property type="project" value="TreeGrafter"/>
</dbReference>
<dbReference type="CDD" id="cd07017">
    <property type="entry name" value="S14_ClpP_2"/>
    <property type="match status" value="1"/>
</dbReference>
<dbReference type="FunFam" id="3.90.226.10:FF:000014">
    <property type="entry name" value="ATP-dependent Clp protease proteolytic subunit"/>
    <property type="match status" value="1"/>
</dbReference>
<dbReference type="Gene3D" id="3.90.226.10">
    <property type="entry name" value="2-enoyl-CoA Hydratase, Chain A, domain 1"/>
    <property type="match status" value="1"/>
</dbReference>
<dbReference type="HAMAP" id="MF_00444">
    <property type="entry name" value="ClpP"/>
    <property type="match status" value="1"/>
</dbReference>
<dbReference type="InterPro" id="IPR001907">
    <property type="entry name" value="ClpP"/>
</dbReference>
<dbReference type="InterPro" id="IPR029045">
    <property type="entry name" value="ClpP/crotonase-like_dom_sf"/>
</dbReference>
<dbReference type="InterPro" id="IPR023562">
    <property type="entry name" value="ClpP/TepA"/>
</dbReference>
<dbReference type="InterPro" id="IPR033135">
    <property type="entry name" value="ClpP_His_AS"/>
</dbReference>
<dbReference type="InterPro" id="IPR018215">
    <property type="entry name" value="ClpP_Ser_AS"/>
</dbReference>
<dbReference type="NCBIfam" id="NF001368">
    <property type="entry name" value="PRK00277.1"/>
    <property type="match status" value="1"/>
</dbReference>
<dbReference type="NCBIfam" id="NF009205">
    <property type="entry name" value="PRK12553.1"/>
    <property type="match status" value="1"/>
</dbReference>
<dbReference type="PANTHER" id="PTHR10381">
    <property type="entry name" value="ATP-DEPENDENT CLP PROTEASE PROTEOLYTIC SUBUNIT"/>
    <property type="match status" value="1"/>
</dbReference>
<dbReference type="PANTHER" id="PTHR10381:SF70">
    <property type="entry name" value="ATP-DEPENDENT CLP PROTEASE PROTEOLYTIC SUBUNIT"/>
    <property type="match status" value="1"/>
</dbReference>
<dbReference type="Pfam" id="PF00574">
    <property type="entry name" value="CLP_protease"/>
    <property type="match status" value="1"/>
</dbReference>
<dbReference type="PRINTS" id="PR00127">
    <property type="entry name" value="CLPPROTEASEP"/>
</dbReference>
<dbReference type="SUPFAM" id="SSF52096">
    <property type="entry name" value="ClpP/crotonase"/>
    <property type="match status" value="1"/>
</dbReference>
<dbReference type="PROSITE" id="PS00382">
    <property type="entry name" value="CLP_PROTEASE_HIS"/>
    <property type="match status" value="1"/>
</dbReference>
<dbReference type="PROSITE" id="PS00381">
    <property type="entry name" value="CLP_PROTEASE_SER"/>
    <property type="match status" value="1"/>
</dbReference>
<name>CLPP_STRP2</name>
<accession>Q04LF4</accession>
<reference key="1">
    <citation type="journal article" date="2007" name="J. Bacteriol.">
        <title>Genome sequence of Avery's virulent serotype 2 strain D39 of Streptococcus pneumoniae and comparison with that of unencapsulated laboratory strain R6.</title>
        <authorList>
            <person name="Lanie J.A."/>
            <person name="Ng W.-L."/>
            <person name="Kazmierczak K.M."/>
            <person name="Andrzejewski T.M."/>
            <person name="Davidsen T.M."/>
            <person name="Wayne K.J."/>
            <person name="Tettelin H."/>
            <person name="Glass J.I."/>
            <person name="Winkler M.E."/>
        </authorList>
    </citation>
    <scope>NUCLEOTIDE SEQUENCE [LARGE SCALE GENOMIC DNA]</scope>
    <source>
        <strain>D39 / NCTC 7466</strain>
    </source>
</reference>
<proteinExistence type="inferred from homology"/>
<sequence>MIPVVIEQTSRGERSYDIYSRLLKDRIIMLTGPVEDNMANSVIAQLLFLDAQDSTKDIYLYVNTPGGSVSAGLAIVDTMNFIKADVQTIVMGMAASMGTVIASSGAKGKRFMLPNAEYMIHQPMGGTGGGTQQTDMAIAAEHLLKTRNTLEKILAENSGQSMEKVHADAERDNWMSAQETLEYGFIDEIMANNSLN</sequence>
<comment type="function">
    <text evidence="1">Cleaves peptides in various proteins in a process that requires ATP hydrolysis. Has a chymotrypsin-like activity. Plays a major role in the degradation of misfolded proteins.</text>
</comment>
<comment type="catalytic activity">
    <reaction evidence="1">
        <text>Hydrolysis of proteins to small peptides in the presence of ATP and magnesium. alpha-casein is the usual test substrate. In the absence of ATP, only oligopeptides shorter than five residues are hydrolyzed (such as succinyl-Leu-Tyr-|-NHMec, and Leu-Tyr-Leu-|-Tyr-Trp, in which cleavage of the -Tyr-|-Leu- and -Tyr-|-Trp bonds also occurs).</text>
        <dbReference type="EC" id="3.4.21.92"/>
    </reaction>
</comment>
<comment type="subunit">
    <text evidence="1">Fourteen ClpP subunits assemble into 2 heptameric rings which stack back to back to give a disk-like structure with a central cavity, resembling the structure of eukaryotic proteasomes.</text>
</comment>
<comment type="subcellular location">
    <subcellularLocation>
        <location evidence="1">Cytoplasm</location>
    </subcellularLocation>
</comment>
<comment type="similarity">
    <text evidence="1">Belongs to the peptidase S14 family.</text>
</comment>